<keyword id="KW-0025">Alternative splicing</keyword>
<keyword id="KW-1015">Disulfide bond</keyword>
<keyword id="KW-0256">Endoplasmic reticulum</keyword>
<keyword id="KW-0325">Glycoprotein</keyword>
<keyword id="KW-0413">Isomerase</keyword>
<keyword id="KW-0472">Membrane</keyword>
<keyword id="KW-1267">Proteomics identification</keyword>
<keyword id="KW-0676">Redox-active center</keyword>
<keyword id="KW-1185">Reference proteome</keyword>
<keyword id="KW-0732">Signal</keyword>
<keyword id="KW-0812">Transmembrane</keyword>
<keyword id="KW-1133">Transmembrane helix</keyword>
<name>TMX3_HUMAN</name>
<accession>Q96JJ7</accession>
<accession>B3KV75</accession>
<accession>Q52LT7</accession>
<accession>Q8N5J0</accession>
<accession>Q9NWJ9</accession>
<sequence>MAAWKSWTALRLCATVVVLDMVVCKGFVEDLDESFKENRNDDIWLVDFYAPWCGHCKKLEPIWNEVGLEMKSIGSPVKVGKMDATSYSSIASEFGVRGYPTIKLLKGDLAYNYRGPRTKDDIIEFAHRVSGALIRPLPSQQMFEHMQKRHRVFFVYVGGESPLKEKYIDAASELIVYTYFFSASEEVVPEYVTLKEMPAVLVFKDETYFVYDEYEDGDLSSWINRERFQNYLAMDGFLLYELGDTGKLVALAVIDEKNTSVEHTRLKSIIQEVARDYRDLFHRDFQFGHMDGNDYINTLLMDELTVPTVVVLNTSNQQYFLLDRQIKNVEDMVQFINNILDGTVEAQGGDSILQRLKRIVFDAKSTIVSIFKSSPLMGCFLFGLPLGVISIMCYGIYTADTDGGYIEERYEVSKSENENQEQIEESKEQQEPSSGGSVVPTVQEPKDVLEKKKD</sequence>
<feature type="signal peptide" evidence="3">
    <location>
        <begin position="1"/>
        <end position="24"/>
    </location>
</feature>
<feature type="chain" id="PRO_0000034185" description="Protein disulfide-isomerase TMX3">
    <location>
        <begin position="25"/>
        <end position="454"/>
    </location>
</feature>
<feature type="topological domain" description="Lumenal" evidence="3">
    <location>
        <begin position="25"/>
        <end position="375"/>
    </location>
</feature>
<feature type="transmembrane region" description="Helical" evidence="3">
    <location>
        <begin position="376"/>
        <end position="396"/>
    </location>
</feature>
<feature type="topological domain" description="Cytoplasmic" evidence="3">
    <location>
        <begin position="397"/>
        <end position="454"/>
    </location>
</feature>
<feature type="domain" description="Thioredoxin" evidence="4">
    <location>
        <begin position="25"/>
        <end position="128"/>
    </location>
</feature>
<feature type="region of interest" description="Disordered" evidence="5">
    <location>
        <begin position="412"/>
        <end position="454"/>
    </location>
</feature>
<feature type="short sequence motif" description="Di-lysine motif" evidence="3">
    <location>
        <begin position="451"/>
        <end position="454"/>
    </location>
</feature>
<feature type="compositionally biased region" description="Basic and acidic residues" evidence="5">
    <location>
        <begin position="444"/>
        <end position="454"/>
    </location>
</feature>
<feature type="active site" description="Nucleophile" evidence="1">
    <location>
        <position position="53"/>
    </location>
</feature>
<feature type="active site" description="Nucleophile" evidence="1">
    <location>
        <position position="56"/>
    </location>
</feature>
<feature type="glycosylation site" description="N-linked (GlcNAc...) asparagine" evidence="8">
    <location>
        <position position="258"/>
    </location>
</feature>
<feature type="glycosylation site" description="N-linked (GlcNAc...) asparagine" evidence="3">
    <location>
        <position position="313"/>
    </location>
</feature>
<feature type="disulfide bond" description="Redox-active" evidence="4">
    <location>
        <begin position="53"/>
        <end position="56"/>
    </location>
</feature>
<feature type="splice variant" id="VSP_013748" description="In isoform 2." evidence="11">
    <original>YVTLK</original>
    <variation>VIFKI</variation>
    <location>
        <begin position="191"/>
        <end position="195"/>
    </location>
</feature>
<feature type="splice variant" id="VSP_013749" description="In isoform 2." evidence="11">
    <location>
        <begin position="196"/>
        <end position="454"/>
    </location>
</feature>
<feature type="sequence variant" id="VAR_088490" description="Found in a patient with microphthalmia, isolated, with coloboma 1 (MCOPCB1); uncertain significance; dbSNP:rs552445199." evidence="9">
    <original>R</original>
    <variation>Q</variation>
    <location>
        <position position="39"/>
    </location>
</feature>
<feature type="sequence variant" id="VAR_022451" description="In dbSNP:rs11557684." evidence="6">
    <original>P</original>
    <variation>S</variation>
    <location>
        <position position="61"/>
    </location>
</feature>
<feature type="sequence variant" id="VAR_088491" description="In dbSNP:rs768329170." evidence="9">
    <original>D</original>
    <variation>N</variation>
    <location>
        <position position="108"/>
    </location>
</feature>
<gene>
    <name type="primary">TMX3</name>
    <name type="synonym">KIAA1830</name>
    <name type="synonym">TXNDC10</name>
</gene>
<organism>
    <name type="scientific">Homo sapiens</name>
    <name type="common">Human</name>
    <dbReference type="NCBI Taxonomy" id="9606"/>
    <lineage>
        <taxon>Eukaryota</taxon>
        <taxon>Metazoa</taxon>
        <taxon>Chordata</taxon>
        <taxon>Craniata</taxon>
        <taxon>Vertebrata</taxon>
        <taxon>Euteleostomi</taxon>
        <taxon>Mammalia</taxon>
        <taxon>Eutheria</taxon>
        <taxon>Euarchontoglires</taxon>
        <taxon>Primates</taxon>
        <taxon>Haplorrhini</taxon>
        <taxon>Catarrhini</taxon>
        <taxon>Hominidae</taxon>
        <taxon>Homo</taxon>
    </lineage>
</organism>
<dbReference type="EC" id="5.3.4.1" evidence="7"/>
<dbReference type="EMBL" id="AB058733">
    <property type="protein sequence ID" value="BAB47459.1"/>
    <property type="status" value="ALT_INIT"/>
    <property type="molecule type" value="mRNA"/>
</dbReference>
<dbReference type="EMBL" id="AK000800">
    <property type="protein sequence ID" value="BAA91381.1"/>
    <property type="status" value="ALT_INIT"/>
    <property type="molecule type" value="mRNA"/>
</dbReference>
<dbReference type="EMBL" id="AK122715">
    <property type="protein sequence ID" value="BAG53687.1"/>
    <property type="molecule type" value="mRNA"/>
</dbReference>
<dbReference type="EMBL" id="BX647846">
    <property type="status" value="NOT_ANNOTATED_CDS"/>
    <property type="molecule type" value="mRNA"/>
</dbReference>
<dbReference type="EMBL" id="BC032325">
    <property type="protein sequence ID" value="AAH32325.1"/>
    <property type="molecule type" value="mRNA"/>
</dbReference>
<dbReference type="EMBL" id="BC093792">
    <property type="protein sequence ID" value="AAH93792.1"/>
    <property type="molecule type" value="mRNA"/>
</dbReference>
<dbReference type="EMBL" id="BC093794">
    <property type="protein sequence ID" value="AAH93794.1"/>
    <property type="molecule type" value="mRNA"/>
</dbReference>
<dbReference type="CCDS" id="CCDS32840.1">
    <molecule id="Q96JJ7-1"/>
</dbReference>
<dbReference type="CCDS" id="CCDS86680.1">
    <molecule id="Q96JJ7-2"/>
</dbReference>
<dbReference type="RefSeq" id="NP_001337441.1">
    <molecule id="Q96JJ7-2"/>
    <property type="nucleotide sequence ID" value="NM_001350512.2"/>
</dbReference>
<dbReference type="RefSeq" id="NP_061895.3">
    <molecule id="Q96JJ7-1"/>
    <property type="nucleotide sequence ID" value="NM_019022.3"/>
</dbReference>
<dbReference type="SMR" id="Q96JJ7"/>
<dbReference type="BioGRID" id="119991">
    <property type="interactions" value="143"/>
</dbReference>
<dbReference type="FunCoup" id="Q96JJ7">
    <property type="interactions" value="3189"/>
</dbReference>
<dbReference type="IntAct" id="Q96JJ7">
    <property type="interactions" value="65"/>
</dbReference>
<dbReference type="MINT" id="Q96JJ7"/>
<dbReference type="STRING" id="9606.ENSP00000299608"/>
<dbReference type="TCDB" id="8.A.88.2.3">
    <property type="family name" value="the calciquestrin (casq) family"/>
</dbReference>
<dbReference type="GlyConnect" id="1656">
    <property type="glycosylation" value="2 N-Linked glycans (1 site)"/>
</dbReference>
<dbReference type="GlyCosmos" id="Q96JJ7">
    <property type="glycosylation" value="2 sites, 2 glycans"/>
</dbReference>
<dbReference type="GlyGen" id="Q96JJ7">
    <property type="glycosylation" value="3 sites, 9 N-linked glycans (1 site), 1 O-linked glycan (1 site)"/>
</dbReference>
<dbReference type="iPTMnet" id="Q96JJ7"/>
<dbReference type="PhosphoSitePlus" id="Q96JJ7"/>
<dbReference type="SwissPalm" id="Q96JJ7"/>
<dbReference type="BioMuta" id="TMX3"/>
<dbReference type="DMDM" id="78103208"/>
<dbReference type="jPOST" id="Q96JJ7"/>
<dbReference type="MassIVE" id="Q96JJ7"/>
<dbReference type="PaxDb" id="9606-ENSP00000299608"/>
<dbReference type="PeptideAtlas" id="Q96JJ7"/>
<dbReference type="ProteomicsDB" id="76972">
    <molecule id="Q96JJ7-1"/>
</dbReference>
<dbReference type="ProteomicsDB" id="76973">
    <molecule id="Q96JJ7-2"/>
</dbReference>
<dbReference type="Pumba" id="Q96JJ7"/>
<dbReference type="TopDownProteomics" id="Q96JJ7-1">
    <molecule id="Q96JJ7-1"/>
</dbReference>
<dbReference type="Antibodypedia" id="2580">
    <property type="antibodies" value="101 antibodies from 20 providers"/>
</dbReference>
<dbReference type="DNASU" id="54495"/>
<dbReference type="Ensembl" id="ENST00000299608.7">
    <molecule id="Q96JJ7-1"/>
    <property type="protein sequence ID" value="ENSP00000299608.2"/>
    <property type="gene ID" value="ENSG00000166479.10"/>
</dbReference>
<dbReference type="Ensembl" id="ENST00000562706.5">
    <molecule id="Q96JJ7-2"/>
    <property type="protein sequence ID" value="ENSP00000457262.1"/>
    <property type="gene ID" value="ENSG00000166479.10"/>
</dbReference>
<dbReference type="GeneID" id="54495"/>
<dbReference type="KEGG" id="hsa:54495"/>
<dbReference type="MANE-Select" id="ENST00000299608.7">
    <property type="protein sequence ID" value="ENSP00000299608.2"/>
    <property type="RefSeq nucleotide sequence ID" value="NM_019022.5"/>
    <property type="RefSeq protein sequence ID" value="NP_061895.3"/>
</dbReference>
<dbReference type="UCSC" id="uc002lkf.4">
    <molecule id="Q96JJ7-1"/>
    <property type="organism name" value="human"/>
</dbReference>
<dbReference type="AGR" id="HGNC:24718"/>
<dbReference type="CTD" id="54495"/>
<dbReference type="DisGeNET" id="54495"/>
<dbReference type="GeneCards" id="TMX3"/>
<dbReference type="HGNC" id="HGNC:24718">
    <property type="gene designation" value="TMX3"/>
</dbReference>
<dbReference type="HPA" id="ENSG00000166479">
    <property type="expression patterns" value="Low tissue specificity"/>
</dbReference>
<dbReference type="MalaCards" id="TMX3"/>
<dbReference type="MIM" id="616102">
    <property type="type" value="gene"/>
</dbReference>
<dbReference type="neXtProt" id="NX_Q96JJ7"/>
<dbReference type="OpenTargets" id="ENSG00000166479"/>
<dbReference type="PharmGKB" id="PA164726632"/>
<dbReference type="VEuPathDB" id="HostDB:ENSG00000166479"/>
<dbReference type="eggNOG" id="KOG4277">
    <property type="taxonomic scope" value="Eukaryota"/>
</dbReference>
<dbReference type="GeneTree" id="ENSGT00930000151022"/>
<dbReference type="HOGENOM" id="CLU_040429_1_0_1"/>
<dbReference type="InParanoid" id="Q96JJ7"/>
<dbReference type="OMA" id="GIEMRNM"/>
<dbReference type="OrthoDB" id="74910at2759"/>
<dbReference type="PAN-GO" id="Q96JJ7">
    <property type="GO annotations" value="3 GO annotations based on evolutionary models"/>
</dbReference>
<dbReference type="PhylomeDB" id="Q96JJ7"/>
<dbReference type="TreeFam" id="TF313807"/>
<dbReference type="PathwayCommons" id="Q96JJ7"/>
<dbReference type="Reactome" id="R-HSA-114608">
    <property type="pathway name" value="Platelet degranulation"/>
</dbReference>
<dbReference type="SignaLink" id="Q96JJ7"/>
<dbReference type="BioGRID-ORCS" id="54495">
    <property type="hits" value="13 hits in 1159 CRISPR screens"/>
</dbReference>
<dbReference type="ChiTaRS" id="TMX3">
    <property type="organism name" value="human"/>
</dbReference>
<dbReference type="GeneWiki" id="TMX3"/>
<dbReference type="GenomeRNAi" id="54495"/>
<dbReference type="Pharos" id="Q96JJ7">
    <property type="development level" value="Tbio"/>
</dbReference>
<dbReference type="PRO" id="PR:Q96JJ7"/>
<dbReference type="Proteomes" id="UP000005640">
    <property type="component" value="Chromosome 18"/>
</dbReference>
<dbReference type="RNAct" id="Q96JJ7">
    <property type="molecule type" value="protein"/>
</dbReference>
<dbReference type="Bgee" id="ENSG00000166479">
    <property type="expression patterns" value="Expressed in calcaneal tendon and 183 other cell types or tissues"/>
</dbReference>
<dbReference type="ExpressionAtlas" id="Q96JJ7">
    <property type="expression patterns" value="baseline and differential"/>
</dbReference>
<dbReference type="GO" id="GO:0009986">
    <property type="term" value="C:cell surface"/>
    <property type="evidence" value="ECO:0000314"/>
    <property type="project" value="MGI"/>
</dbReference>
<dbReference type="GO" id="GO:0005783">
    <property type="term" value="C:endoplasmic reticulum"/>
    <property type="evidence" value="ECO:0000318"/>
    <property type="project" value="GO_Central"/>
</dbReference>
<dbReference type="GO" id="GO:0005789">
    <property type="term" value="C:endoplasmic reticulum membrane"/>
    <property type="evidence" value="ECO:0000314"/>
    <property type="project" value="WormBase"/>
</dbReference>
<dbReference type="GO" id="GO:0005886">
    <property type="term" value="C:plasma membrane"/>
    <property type="evidence" value="ECO:0000304"/>
    <property type="project" value="Reactome"/>
</dbReference>
<dbReference type="GO" id="GO:0031092">
    <property type="term" value="C:platelet alpha granule membrane"/>
    <property type="evidence" value="ECO:0000304"/>
    <property type="project" value="Reactome"/>
</dbReference>
<dbReference type="GO" id="GO:0003756">
    <property type="term" value="F:protein disulfide isomerase activity"/>
    <property type="evidence" value="ECO:0007669"/>
    <property type="project" value="UniProtKB-EC"/>
</dbReference>
<dbReference type="GO" id="GO:0015035">
    <property type="term" value="F:protein-disulfide reductase activity"/>
    <property type="evidence" value="ECO:0000314"/>
    <property type="project" value="WormBase"/>
</dbReference>
<dbReference type="CDD" id="cd03000">
    <property type="entry name" value="PDI_a_TMX3"/>
    <property type="match status" value="1"/>
</dbReference>
<dbReference type="FunFam" id="3.40.30.10:FF:000115">
    <property type="entry name" value="protein disulfide-isomerase TMX3 isoform X1"/>
    <property type="match status" value="1"/>
</dbReference>
<dbReference type="FunFam" id="3.40.30.10:FF:000121">
    <property type="entry name" value="protein disulfide-isomerase TMX3 isoform X1"/>
    <property type="match status" value="1"/>
</dbReference>
<dbReference type="Gene3D" id="3.40.30.10">
    <property type="entry name" value="Glutaredoxin"/>
    <property type="match status" value="2"/>
</dbReference>
<dbReference type="InterPro" id="IPR052250">
    <property type="entry name" value="PDI_TMX3"/>
</dbReference>
<dbReference type="InterPro" id="IPR036249">
    <property type="entry name" value="Thioredoxin-like_sf"/>
</dbReference>
<dbReference type="InterPro" id="IPR017937">
    <property type="entry name" value="Thioredoxin_CS"/>
</dbReference>
<dbReference type="InterPro" id="IPR013766">
    <property type="entry name" value="Thioredoxin_domain"/>
</dbReference>
<dbReference type="PANTHER" id="PTHR46426">
    <property type="entry name" value="PROTEIN DISULFIDE-ISOMERASE TMX3"/>
    <property type="match status" value="1"/>
</dbReference>
<dbReference type="PANTHER" id="PTHR46426:SF1">
    <property type="entry name" value="PROTEIN DISULFIDE-ISOMERASE TMX3"/>
    <property type="match status" value="1"/>
</dbReference>
<dbReference type="Pfam" id="PF00085">
    <property type="entry name" value="Thioredoxin"/>
    <property type="match status" value="1"/>
</dbReference>
<dbReference type="Pfam" id="PF13848">
    <property type="entry name" value="Thioredoxin_6"/>
    <property type="match status" value="1"/>
</dbReference>
<dbReference type="PRINTS" id="PR00421">
    <property type="entry name" value="THIOREDOXIN"/>
</dbReference>
<dbReference type="SUPFAM" id="SSF52833">
    <property type="entry name" value="Thioredoxin-like"/>
    <property type="match status" value="2"/>
</dbReference>
<dbReference type="PROSITE" id="PS00194">
    <property type="entry name" value="THIOREDOXIN_1"/>
    <property type="match status" value="1"/>
</dbReference>
<dbReference type="PROSITE" id="PS51352">
    <property type="entry name" value="THIOREDOXIN_2"/>
    <property type="match status" value="1"/>
</dbReference>
<reference key="1">
    <citation type="journal article" date="2001" name="DNA Res.">
        <title>Prediction of the coding sequences of unidentified human genes. XX. The complete sequences of 100 new cDNA clones from brain which code for large proteins in vitro.</title>
        <authorList>
            <person name="Nagase T."/>
            <person name="Nakayama M."/>
            <person name="Nakajima D."/>
            <person name="Kikuno R."/>
            <person name="Ohara O."/>
        </authorList>
    </citation>
    <scope>NUCLEOTIDE SEQUENCE [LARGE SCALE MRNA] (ISOFORM 1)</scope>
    <source>
        <tissue>Brain</tissue>
    </source>
</reference>
<reference key="2">
    <citation type="journal article" date="2004" name="Nat. Genet.">
        <title>Complete sequencing and characterization of 21,243 full-length human cDNAs.</title>
        <authorList>
            <person name="Ota T."/>
            <person name="Suzuki Y."/>
            <person name="Nishikawa T."/>
            <person name="Otsuki T."/>
            <person name="Sugiyama T."/>
            <person name="Irie R."/>
            <person name="Wakamatsu A."/>
            <person name="Hayashi K."/>
            <person name="Sato H."/>
            <person name="Nagai K."/>
            <person name="Kimura K."/>
            <person name="Makita H."/>
            <person name="Sekine M."/>
            <person name="Obayashi M."/>
            <person name="Nishi T."/>
            <person name="Shibahara T."/>
            <person name="Tanaka T."/>
            <person name="Ishii S."/>
            <person name="Yamamoto J."/>
            <person name="Saito K."/>
            <person name="Kawai Y."/>
            <person name="Isono Y."/>
            <person name="Nakamura Y."/>
            <person name="Nagahari K."/>
            <person name="Murakami K."/>
            <person name="Yasuda T."/>
            <person name="Iwayanagi T."/>
            <person name="Wagatsuma M."/>
            <person name="Shiratori A."/>
            <person name="Sudo H."/>
            <person name="Hosoiri T."/>
            <person name="Kaku Y."/>
            <person name="Kodaira H."/>
            <person name="Kondo H."/>
            <person name="Sugawara M."/>
            <person name="Takahashi M."/>
            <person name="Kanda K."/>
            <person name="Yokoi T."/>
            <person name="Furuya T."/>
            <person name="Kikkawa E."/>
            <person name="Omura Y."/>
            <person name="Abe K."/>
            <person name="Kamihara K."/>
            <person name="Katsuta N."/>
            <person name="Sato K."/>
            <person name="Tanikawa M."/>
            <person name="Yamazaki M."/>
            <person name="Ninomiya K."/>
            <person name="Ishibashi T."/>
            <person name="Yamashita H."/>
            <person name="Murakawa K."/>
            <person name="Fujimori K."/>
            <person name="Tanai H."/>
            <person name="Kimata M."/>
            <person name="Watanabe M."/>
            <person name="Hiraoka S."/>
            <person name="Chiba Y."/>
            <person name="Ishida S."/>
            <person name="Ono Y."/>
            <person name="Takiguchi S."/>
            <person name="Watanabe S."/>
            <person name="Yosida M."/>
            <person name="Hotuta T."/>
            <person name="Kusano J."/>
            <person name="Kanehori K."/>
            <person name="Takahashi-Fujii A."/>
            <person name="Hara H."/>
            <person name="Tanase T.-O."/>
            <person name="Nomura Y."/>
            <person name="Togiya S."/>
            <person name="Komai F."/>
            <person name="Hara R."/>
            <person name="Takeuchi K."/>
            <person name="Arita M."/>
            <person name="Imose N."/>
            <person name="Musashino K."/>
            <person name="Yuuki H."/>
            <person name="Oshima A."/>
            <person name="Sasaki N."/>
            <person name="Aotsuka S."/>
            <person name="Yoshikawa Y."/>
            <person name="Matsunawa H."/>
            <person name="Ichihara T."/>
            <person name="Shiohata N."/>
            <person name="Sano S."/>
            <person name="Moriya S."/>
            <person name="Momiyama H."/>
            <person name="Satoh N."/>
            <person name="Takami S."/>
            <person name="Terashima Y."/>
            <person name="Suzuki O."/>
            <person name="Nakagawa S."/>
            <person name="Senoh A."/>
            <person name="Mizoguchi H."/>
            <person name="Goto Y."/>
            <person name="Shimizu F."/>
            <person name="Wakebe H."/>
            <person name="Hishigaki H."/>
            <person name="Watanabe T."/>
            <person name="Sugiyama A."/>
            <person name="Takemoto M."/>
            <person name="Kawakami B."/>
            <person name="Yamazaki M."/>
            <person name="Watanabe K."/>
            <person name="Kumagai A."/>
            <person name="Itakura S."/>
            <person name="Fukuzumi Y."/>
            <person name="Fujimori Y."/>
            <person name="Komiyama M."/>
            <person name="Tashiro H."/>
            <person name="Tanigami A."/>
            <person name="Fujiwara T."/>
            <person name="Ono T."/>
            <person name="Yamada K."/>
            <person name="Fujii Y."/>
            <person name="Ozaki K."/>
            <person name="Hirao M."/>
            <person name="Ohmori Y."/>
            <person name="Kawabata A."/>
            <person name="Hikiji T."/>
            <person name="Kobatake N."/>
            <person name="Inagaki H."/>
            <person name="Ikema Y."/>
            <person name="Okamoto S."/>
            <person name="Okitani R."/>
            <person name="Kawakami T."/>
            <person name="Noguchi S."/>
            <person name="Itoh T."/>
            <person name="Shigeta K."/>
            <person name="Senba T."/>
            <person name="Matsumura K."/>
            <person name="Nakajima Y."/>
            <person name="Mizuno T."/>
            <person name="Morinaga M."/>
            <person name="Sasaki M."/>
            <person name="Togashi T."/>
            <person name="Oyama M."/>
            <person name="Hata H."/>
            <person name="Watanabe M."/>
            <person name="Komatsu T."/>
            <person name="Mizushima-Sugano J."/>
            <person name="Satoh T."/>
            <person name="Shirai Y."/>
            <person name="Takahashi Y."/>
            <person name="Nakagawa K."/>
            <person name="Okumura K."/>
            <person name="Nagase T."/>
            <person name="Nomura N."/>
            <person name="Kikuchi H."/>
            <person name="Masuho Y."/>
            <person name="Yamashita R."/>
            <person name="Nakai K."/>
            <person name="Yada T."/>
            <person name="Nakamura Y."/>
            <person name="Ohara O."/>
            <person name="Isogai T."/>
            <person name="Sugano S."/>
        </authorList>
    </citation>
    <scope>NUCLEOTIDE SEQUENCE [LARGE SCALE MRNA] (ISOFORM 1)</scope>
    <source>
        <tissue>Colon</tissue>
        <tissue>Tongue</tissue>
    </source>
</reference>
<reference key="3">
    <citation type="journal article" date="2007" name="BMC Genomics">
        <title>The full-ORF clone resource of the German cDNA consortium.</title>
        <authorList>
            <person name="Bechtel S."/>
            <person name="Rosenfelder H."/>
            <person name="Duda A."/>
            <person name="Schmidt C.P."/>
            <person name="Ernst U."/>
            <person name="Wellenreuther R."/>
            <person name="Mehrle A."/>
            <person name="Schuster C."/>
            <person name="Bahr A."/>
            <person name="Bloecker H."/>
            <person name="Heubner D."/>
            <person name="Hoerlein A."/>
            <person name="Michel G."/>
            <person name="Wedler H."/>
            <person name="Koehrer K."/>
            <person name="Ottenwaelder B."/>
            <person name="Poustka A."/>
            <person name="Wiemann S."/>
            <person name="Schupp I."/>
        </authorList>
    </citation>
    <scope>NUCLEOTIDE SEQUENCE [LARGE SCALE MRNA] (ISOFORM 1)</scope>
    <source>
        <tissue>Skeletal muscle</tissue>
    </source>
</reference>
<reference key="4">
    <citation type="journal article" date="2004" name="Genome Res.">
        <title>The status, quality, and expansion of the NIH full-length cDNA project: the Mammalian Gene Collection (MGC).</title>
        <authorList>
            <consortium name="The MGC Project Team"/>
        </authorList>
    </citation>
    <scope>NUCLEOTIDE SEQUENCE [LARGE SCALE MRNA] (ISOFORMS 1 AND 2)</scope>
    <scope>VARIANT SER-61</scope>
    <source>
        <tissue>Brain</tissue>
        <tissue>Skin</tissue>
    </source>
</reference>
<reference key="5">
    <citation type="journal article" date="2005" name="J. Biol. Chem.">
        <title>Identification and characterization of a novel thioredoxin-related transmembrane protein of the endoplasmic reticulum.</title>
        <authorList>
            <person name="Haugstetter J."/>
            <person name="Blicher T."/>
            <person name="Ellgaard L."/>
        </authorList>
    </citation>
    <scope>FUNCTION</scope>
    <scope>ENZYME ACTIVITY</scope>
    <scope>BIOPHYSICOCHEMICAL PROPERTIES</scope>
    <scope>SUBCELLULAR LOCATION</scope>
    <scope>TISSUE SPECIFICITY</scope>
    <scope>INDUCTION</scope>
    <scope>GLYCOSYLATION</scope>
</reference>
<reference key="6">
    <citation type="journal article" date="2009" name="J. Proteome Res.">
        <title>Glycoproteomics analysis of human liver tissue by combination of multiple enzyme digestion and hydrazide chemistry.</title>
        <authorList>
            <person name="Chen R."/>
            <person name="Jiang X."/>
            <person name="Sun D."/>
            <person name="Han G."/>
            <person name="Wang F."/>
            <person name="Ye M."/>
            <person name="Wang L."/>
            <person name="Zou H."/>
        </authorList>
    </citation>
    <scope>GLYCOSYLATION [LARGE SCALE ANALYSIS] AT ASN-258</scope>
    <source>
        <tissue>Liver</tissue>
    </source>
</reference>
<reference key="7">
    <citation type="journal article" date="2010" name="PLoS ONE">
        <title>A male with unilateral microphthalmia reveals a role for TMX3 in eye development.</title>
        <authorList>
            <person name="Chao R."/>
            <person name="Nevin L."/>
            <person name="Agarwal P."/>
            <person name="Riemer J."/>
            <person name="Bai X."/>
            <person name="Delaney A."/>
            <person name="Akana M."/>
            <person name="JimenezLopez N."/>
            <person name="Bardakjian T."/>
            <person name="Schneider A."/>
            <person name="Chassaing N."/>
            <person name="Schorderet D.F."/>
            <person name="FitzPatrick D."/>
            <person name="Kwok P.Y."/>
            <person name="Ellgaard L."/>
            <person name="Gould D.B."/>
            <person name="Zhang Y."/>
            <person name="Malicki J."/>
            <person name="Baier H."/>
            <person name="Slavotinek A."/>
        </authorList>
    </citation>
    <scope>VARIANTS GLN-39 AND ASN-108</scope>
</reference>
<reference key="8">
    <citation type="journal article" date="2011" name="BMC Syst. Biol.">
        <title>Initial characterization of the human central proteome.</title>
        <authorList>
            <person name="Burkard T.R."/>
            <person name="Planyavsky M."/>
            <person name="Kaupe I."/>
            <person name="Breitwieser F.P."/>
            <person name="Buerckstuemmer T."/>
            <person name="Bennett K.L."/>
            <person name="Superti-Furga G."/>
            <person name="Colinge J."/>
        </authorList>
    </citation>
    <scope>IDENTIFICATION BY MASS SPECTROMETRY [LARGE SCALE ANALYSIS]</scope>
</reference>
<reference key="9">
    <citation type="journal article" date="2015" name="Proteomics">
        <title>N-terminome analysis of the human mitochondrial proteome.</title>
        <authorList>
            <person name="Vaca Jacome A.S."/>
            <person name="Rabilloud T."/>
            <person name="Schaeffer-Reiss C."/>
            <person name="Rompais M."/>
            <person name="Ayoub D."/>
            <person name="Lane L."/>
            <person name="Bairoch A."/>
            <person name="Van Dorsselaer A."/>
            <person name="Carapito C."/>
        </authorList>
    </citation>
    <scope>IDENTIFICATION BY MASS SPECTROMETRY [LARGE SCALE ANALYSIS]</scope>
</reference>
<reference key="10">
    <citation type="journal article" date="2019" name="EMBO J.">
        <title>Redox signals at the ER-mitochondria interface control melanoma progression.</title>
        <authorList>
            <person name="Zhang X."/>
            <person name="Gibhardt C.S."/>
            <person name="Will T."/>
            <person name="Stanisz H."/>
            <person name="Koerbel C."/>
            <person name="Mitkovski M."/>
            <person name="Stejerean I."/>
            <person name="Cappello S."/>
            <person name="Pacheu-Grau D."/>
            <person name="Dudek J."/>
            <person name="Tahbaz N."/>
            <person name="Mina L."/>
            <person name="Simmen T."/>
            <person name="Laschke M.W."/>
            <person name="Menger M.D."/>
            <person name="Schoen M.P."/>
            <person name="Helms V."/>
            <person name="Niemeyer B.A."/>
            <person name="Rehling P."/>
            <person name="Vultur A."/>
            <person name="Bogeski I."/>
        </authorList>
    </citation>
    <scope>FUNCTION</scope>
</reference>
<evidence type="ECO:0000250" key="1">
    <source>
        <dbReference type="UniProtKB" id="Q9H3N1"/>
    </source>
</evidence>
<evidence type="ECO:0000250" key="2">
    <source>
        <dbReference type="UniProtKB" id="Q9Y320"/>
    </source>
</evidence>
<evidence type="ECO:0000255" key="3"/>
<evidence type="ECO:0000255" key="4">
    <source>
        <dbReference type="PROSITE-ProRule" id="PRU00691"/>
    </source>
</evidence>
<evidence type="ECO:0000256" key="5">
    <source>
        <dbReference type="SAM" id="MobiDB-lite"/>
    </source>
</evidence>
<evidence type="ECO:0000269" key="6">
    <source>
    </source>
</evidence>
<evidence type="ECO:0000269" key="7">
    <source>
    </source>
</evidence>
<evidence type="ECO:0000269" key="8">
    <source>
    </source>
</evidence>
<evidence type="ECO:0000269" key="9">
    <source>
    </source>
</evidence>
<evidence type="ECO:0000269" key="10">
    <source>
    </source>
</evidence>
<evidence type="ECO:0000303" key="11">
    <source>
    </source>
</evidence>
<evidence type="ECO:0000305" key="12"/>
<comment type="function">
    <text evidence="7 10">Probable disulfide isomerase, which participates in the folding of proteins containing disulfide bonds. May act as a dithiol oxidase (PubMed:15623505). Acts as a regulator of endoplasmic reticulum-mitochondria contact sites via its ability to regulate redox signals (PubMed:31304984).</text>
</comment>
<comment type="catalytic activity">
    <reaction evidence="7">
        <text>Catalyzes the rearrangement of -S-S- bonds in proteins.</text>
        <dbReference type="EC" id="5.3.4.1"/>
    </reaction>
</comment>
<comment type="biophysicochemical properties">
    <redoxPotential>
        <text evidence="7">E(0) is -157 mV.</text>
    </redoxPotential>
</comment>
<comment type="interaction">
    <interactant intactId="EBI-2514069">
        <id>Q96JJ7</id>
    </interactant>
    <interactant intactId="EBI-741101">
        <id>Q13643</id>
        <label>FHL3</label>
    </interactant>
    <organismsDiffer>false</organismsDiffer>
    <experiments>3</experiments>
</comment>
<comment type="interaction">
    <interactant intactId="EBI-25833898">
        <id>Q96JJ7-2</id>
    </interactant>
    <interactant intactId="EBI-1049597">
        <id>P27797</id>
        <label>CALR</label>
    </interactant>
    <organismsDiffer>false</organismsDiffer>
    <experiments>3</experiments>
</comment>
<comment type="interaction">
    <interactant intactId="EBI-25833898">
        <id>Q96JJ7-2</id>
    </interactant>
    <interactant intactId="EBI-351007">
        <id>P36957</id>
        <label>DLST</label>
    </interactant>
    <organismsDiffer>false</organismsDiffer>
    <experiments>3</experiments>
</comment>
<comment type="interaction">
    <interactant intactId="EBI-25833898">
        <id>Q96JJ7-2</id>
    </interactant>
    <interactant intactId="EBI-1055945">
        <id>Q8TDX7</id>
        <label>NEK7</label>
    </interactant>
    <organismsDiffer>false</organismsDiffer>
    <experiments>3</experiments>
</comment>
<comment type="interaction">
    <interactant intactId="EBI-25833898">
        <id>Q96JJ7-2</id>
    </interactant>
    <interactant intactId="EBI-716404">
        <id>P16284</id>
        <label>PECAM1</label>
    </interactant>
    <organismsDiffer>false</organismsDiffer>
    <experiments>3</experiments>
</comment>
<comment type="subcellular location">
    <subcellularLocation>
        <location evidence="7">Endoplasmic reticulum membrane</location>
        <topology evidence="7">Single-pass membrane protein</topology>
    </subcellularLocation>
</comment>
<comment type="alternative products">
    <event type="alternative splicing"/>
    <isoform>
        <id>Q96JJ7-1</id>
        <name>1</name>
        <sequence type="displayed"/>
    </isoform>
    <isoform>
        <id>Q96JJ7-2</id>
        <name>2</name>
        <sequence type="described" ref="VSP_013748 VSP_013749"/>
    </isoform>
</comment>
<comment type="tissue specificity">
    <text evidence="7">Widely expressed. Expressed in brain, testis, lung, skin, kidney, uterus, bone, stomach, liver, prostate, placenta, eye and muscle.</text>
</comment>
<comment type="induction">
    <text evidence="7">Not up-regulated by unfolded protein response (UPR).</text>
</comment>
<comment type="domain">
    <text evidence="2">The di-lysine motif confers endoplasmic reticulum localization for type I membrane proteins.</text>
</comment>
<comment type="PTM">
    <text evidence="7 8">N-glycosylated.</text>
</comment>
<comment type="similarity">
    <text evidence="12">Belongs to the protein disulfide isomerase family.</text>
</comment>
<comment type="sequence caution" evidence="12">
    <conflict type="erroneous initiation">
        <sequence resource="EMBL-CDS" id="BAA91381"/>
    </conflict>
    <text>Extended N-terminus.</text>
</comment>
<comment type="sequence caution" evidence="12">
    <conflict type="erroneous initiation">
        <sequence resource="EMBL-CDS" id="BAB47459"/>
    </conflict>
    <text>Extended N-terminus.</text>
</comment>
<protein>
    <recommendedName>
        <fullName>Protein disulfide-isomerase TMX3</fullName>
        <ecNumber evidence="7">5.3.4.1</ecNumber>
    </recommendedName>
    <alternativeName>
        <fullName>Thioredoxin domain-containing protein 10</fullName>
    </alternativeName>
    <alternativeName>
        <fullName>Thioredoxin-related transmembrane protein 3</fullName>
    </alternativeName>
</protein>
<proteinExistence type="evidence at protein level"/>